<organism>
    <name type="scientific">Helicobacter hepaticus (strain ATCC 51449 / 3B1)</name>
    <dbReference type="NCBI Taxonomy" id="235279"/>
    <lineage>
        <taxon>Bacteria</taxon>
        <taxon>Pseudomonadati</taxon>
        <taxon>Campylobacterota</taxon>
        <taxon>Epsilonproteobacteria</taxon>
        <taxon>Campylobacterales</taxon>
        <taxon>Helicobacteraceae</taxon>
        <taxon>Helicobacter</taxon>
    </lineage>
</organism>
<accession>Q7VJX7</accession>
<gene>
    <name evidence="1" type="primary">rnpA</name>
    <name type="ordered locus">HH_0115</name>
</gene>
<keyword id="KW-0255">Endonuclease</keyword>
<keyword id="KW-0378">Hydrolase</keyword>
<keyword id="KW-0540">Nuclease</keyword>
<keyword id="KW-1185">Reference proteome</keyword>
<keyword id="KW-0694">RNA-binding</keyword>
<keyword id="KW-0819">tRNA processing</keyword>
<protein>
    <recommendedName>
        <fullName evidence="1">Ribonuclease P protein component</fullName>
        <shortName evidence="1">RNase P protein</shortName>
        <shortName evidence="1">RNaseP protein</shortName>
        <ecNumber evidence="1">3.1.26.5</ecNumber>
    </recommendedName>
    <alternativeName>
        <fullName evidence="1">Protein C5</fullName>
    </alternativeName>
</protein>
<evidence type="ECO:0000255" key="1">
    <source>
        <dbReference type="HAMAP-Rule" id="MF_00227"/>
    </source>
</evidence>
<name>RNPA_HELHP</name>
<proteinExistence type="inferred from homology"/>
<sequence length="146" mass="17342">MARLDTLKNKAEFDFVYRNAQRFFHKDFVLYMLKFSSIRESYPLRQQRIFQSIQSRNAKLHLGLSVSRKIGKAYMRNLIKRRIKAIAYENCADFKDVIFLIVVKEGIREMDFATLKNNLLASFIKMYNAKKTRNIRVLHQISHYAG</sequence>
<feature type="chain" id="PRO_0000198468" description="Ribonuclease P protein component">
    <location>
        <begin position="1"/>
        <end position="146"/>
    </location>
</feature>
<dbReference type="EC" id="3.1.26.5" evidence="1"/>
<dbReference type="EMBL" id="AE017125">
    <property type="protein sequence ID" value="AAP76712.1"/>
    <property type="molecule type" value="Genomic_DNA"/>
</dbReference>
<dbReference type="RefSeq" id="WP_011114958.1">
    <property type="nucleotide sequence ID" value="NC_004917.1"/>
</dbReference>
<dbReference type="SMR" id="Q7VJX7"/>
<dbReference type="STRING" id="235279.HH_0115"/>
<dbReference type="KEGG" id="hhe:HH_0115"/>
<dbReference type="eggNOG" id="COG0594">
    <property type="taxonomic scope" value="Bacteria"/>
</dbReference>
<dbReference type="HOGENOM" id="CLU_1832393_0_0_7"/>
<dbReference type="OrthoDB" id="9810867at2"/>
<dbReference type="Proteomes" id="UP000002495">
    <property type="component" value="Chromosome"/>
</dbReference>
<dbReference type="GO" id="GO:0030677">
    <property type="term" value="C:ribonuclease P complex"/>
    <property type="evidence" value="ECO:0007669"/>
    <property type="project" value="TreeGrafter"/>
</dbReference>
<dbReference type="GO" id="GO:0042781">
    <property type="term" value="F:3'-tRNA processing endoribonuclease activity"/>
    <property type="evidence" value="ECO:0007669"/>
    <property type="project" value="TreeGrafter"/>
</dbReference>
<dbReference type="GO" id="GO:0004526">
    <property type="term" value="F:ribonuclease P activity"/>
    <property type="evidence" value="ECO:0007669"/>
    <property type="project" value="UniProtKB-UniRule"/>
</dbReference>
<dbReference type="GO" id="GO:0000049">
    <property type="term" value="F:tRNA binding"/>
    <property type="evidence" value="ECO:0007669"/>
    <property type="project" value="UniProtKB-UniRule"/>
</dbReference>
<dbReference type="GO" id="GO:0001682">
    <property type="term" value="P:tRNA 5'-leader removal"/>
    <property type="evidence" value="ECO:0007669"/>
    <property type="project" value="UniProtKB-UniRule"/>
</dbReference>
<dbReference type="Gene3D" id="3.30.230.10">
    <property type="match status" value="1"/>
</dbReference>
<dbReference type="HAMAP" id="MF_00227">
    <property type="entry name" value="RNase_P"/>
    <property type="match status" value="1"/>
</dbReference>
<dbReference type="InterPro" id="IPR020568">
    <property type="entry name" value="Ribosomal_Su5_D2-typ_SF"/>
</dbReference>
<dbReference type="InterPro" id="IPR014721">
    <property type="entry name" value="Ribsml_uS5_D2-typ_fold_subgr"/>
</dbReference>
<dbReference type="InterPro" id="IPR000100">
    <property type="entry name" value="RNase_P"/>
</dbReference>
<dbReference type="InterPro" id="IPR020539">
    <property type="entry name" value="RNase_P_CS"/>
</dbReference>
<dbReference type="NCBIfam" id="TIGR00188">
    <property type="entry name" value="rnpA"/>
    <property type="match status" value="1"/>
</dbReference>
<dbReference type="PANTHER" id="PTHR33992">
    <property type="entry name" value="RIBONUCLEASE P PROTEIN COMPONENT"/>
    <property type="match status" value="1"/>
</dbReference>
<dbReference type="PANTHER" id="PTHR33992:SF1">
    <property type="entry name" value="RIBONUCLEASE P PROTEIN COMPONENT"/>
    <property type="match status" value="1"/>
</dbReference>
<dbReference type="Pfam" id="PF00825">
    <property type="entry name" value="Ribonuclease_P"/>
    <property type="match status" value="1"/>
</dbReference>
<dbReference type="SUPFAM" id="SSF54211">
    <property type="entry name" value="Ribosomal protein S5 domain 2-like"/>
    <property type="match status" value="1"/>
</dbReference>
<dbReference type="PROSITE" id="PS00648">
    <property type="entry name" value="RIBONUCLEASE_P"/>
    <property type="match status" value="1"/>
</dbReference>
<comment type="function">
    <text evidence="1">RNaseP catalyzes the removal of the 5'-leader sequence from pre-tRNA to produce the mature 5'-terminus. It can also cleave other RNA substrates such as 4.5S RNA. The protein component plays an auxiliary but essential role in vivo by binding to the 5'-leader sequence and broadening the substrate specificity of the ribozyme.</text>
</comment>
<comment type="catalytic activity">
    <reaction evidence="1">
        <text>Endonucleolytic cleavage of RNA, removing 5'-extranucleotides from tRNA precursor.</text>
        <dbReference type="EC" id="3.1.26.5"/>
    </reaction>
</comment>
<comment type="subunit">
    <text evidence="1">Consists of a catalytic RNA component (M1 or rnpB) and a protein subunit.</text>
</comment>
<comment type="similarity">
    <text evidence="1">Belongs to the RnpA family.</text>
</comment>
<reference key="1">
    <citation type="journal article" date="2003" name="Proc. Natl. Acad. Sci. U.S.A.">
        <title>The complete genome sequence of the carcinogenic bacterium Helicobacter hepaticus.</title>
        <authorList>
            <person name="Suerbaum S."/>
            <person name="Josenhans C."/>
            <person name="Sterzenbach T."/>
            <person name="Drescher B."/>
            <person name="Brandt P."/>
            <person name="Bell M."/>
            <person name="Droege M."/>
            <person name="Fartmann B."/>
            <person name="Fischer H.-P."/>
            <person name="Ge Z."/>
            <person name="Hoerster A."/>
            <person name="Holland R."/>
            <person name="Klein K."/>
            <person name="Koenig J."/>
            <person name="Macko L."/>
            <person name="Mendz G.L."/>
            <person name="Nyakatura G."/>
            <person name="Schauer D.B."/>
            <person name="Shen Z."/>
            <person name="Weber J."/>
            <person name="Frosch M."/>
            <person name="Fox J.G."/>
        </authorList>
    </citation>
    <scope>NUCLEOTIDE SEQUENCE [LARGE SCALE GENOMIC DNA]</scope>
    <source>
        <strain>ATCC 51449 / 3B1</strain>
    </source>
</reference>